<evidence type="ECO:0000250" key="1"/>
<evidence type="ECO:0000305" key="2"/>
<gene>
    <name type="primary">AMPP</name>
    <name type="ORF">HCAG_02992</name>
</gene>
<proteinExistence type="inferred from homology"/>
<keyword id="KW-0031">Aminopeptidase</keyword>
<keyword id="KW-0378">Hydrolase</keyword>
<keyword id="KW-0464">Manganese</keyword>
<keyword id="KW-0479">Metal-binding</keyword>
<keyword id="KW-0482">Metalloprotease</keyword>
<keyword id="KW-0645">Protease</keyword>
<keyword id="KW-1185">Reference proteome</keyword>
<accession>A6R035</accession>
<reference key="1">
    <citation type="journal article" date="2009" name="Genome Res.">
        <title>Comparative genomic analyses of the human fungal pathogens Coccidioides and their relatives.</title>
        <authorList>
            <person name="Sharpton T.J."/>
            <person name="Stajich J.E."/>
            <person name="Rounsley S.D."/>
            <person name="Gardner M.J."/>
            <person name="Wortman J.R."/>
            <person name="Jordar V.S."/>
            <person name="Maiti R."/>
            <person name="Kodira C.D."/>
            <person name="Neafsey D.E."/>
            <person name="Zeng Q."/>
            <person name="Hung C.-Y."/>
            <person name="McMahan C."/>
            <person name="Muszewska A."/>
            <person name="Grynberg M."/>
            <person name="Mandel M.A."/>
            <person name="Kellner E.M."/>
            <person name="Barker B.M."/>
            <person name="Galgiani J.N."/>
            <person name="Orbach M.J."/>
            <person name="Kirkland T.N."/>
            <person name="Cole G.T."/>
            <person name="Henn M.R."/>
            <person name="Birren B.W."/>
            <person name="Taylor J.W."/>
        </authorList>
    </citation>
    <scope>NUCLEOTIDE SEQUENCE [LARGE SCALE GENOMIC DNA]</scope>
    <source>
        <strain>NAm1 / WU24</strain>
    </source>
</reference>
<sequence>MGPIDTSQRLARLRELMQERKVDVYIVPSEDSHQSEYIAHCDGRREFISGFTGSAGCAIVSMTKAALSTDGRYFNQAAKQLDSNWILLKRGFENMPTWQEWTAEQAEGGKVVGVDPSLITAFDARNLSETIKKCGGSLLGVQENLVDLVWGTERPARPSEKVALHPIEFAGKSFEEKISDLRKELQKKKCAGFVISMLDEIAWLFNLRGNDIPYNPVFFAYAIITQSTADLYIDEEKLPAEVKNYLGDKVSLKPYGSIFEDAKVLGQSAQNKSDGEASTKPPQKFLISTRASWSLSLALGGEKNVEEVRSPITDAKAIKNEAELEGMRACHIRDGAALSEYFAWLENELVNKKTVLNEVDASDKLEQIRSKHQHFVGLSFDTISSTGPNAAVIHYKAERNNCSIIDPKAVYLCDSGAQYLDGTTDTTRTLHFGEPTEMEKKAYTLVLKGLISIDTAVFPKGTTGFALDAFARQYLWKEGLDYLHGTGHGVGSYLNVHEGPIGLGTRVQYSEVAIAPGNVISDEPGYYEDGVFGIRIENIIMAKEVKTTHKFGEKPWLGFEHVTMTPLCQKLINPSLLSDAEKKWVNDYHTEIWEKTSKYFENDELTRNWLKRETQPI</sequence>
<comment type="function">
    <text evidence="1">Catalyzes the removal of a penultimate prolyl residue from the N-termini of peptides.</text>
</comment>
<comment type="catalytic activity">
    <reaction>
        <text>Release of any N-terminal amino acid, including proline, that is linked to proline, even from a dipeptide or tripeptide.</text>
        <dbReference type="EC" id="3.4.11.9"/>
    </reaction>
</comment>
<comment type="cofactor">
    <cofactor evidence="1">
        <name>Mn(2+)</name>
        <dbReference type="ChEBI" id="CHEBI:29035"/>
    </cofactor>
    <text evidence="1">Binds 2 manganese ions per subunit.</text>
</comment>
<comment type="similarity">
    <text evidence="2">Belongs to the peptidase M24B family.</text>
</comment>
<organism>
    <name type="scientific">Ajellomyces capsulatus (strain NAm1 / WU24)</name>
    <name type="common">Darling's disease fungus</name>
    <name type="synonym">Histoplasma capsulatum</name>
    <dbReference type="NCBI Taxonomy" id="2059318"/>
    <lineage>
        <taxon>Eukaryota</taxon>
        <taxon>Fungi</taxon>
        <taxon>Dikarya</taxon>
        <taxon>Ascomycota</taxon>
        <taxon>Pezizomycotina</taxon>
        <taxon>Eurotiomycetes</taxon>
        <taxon>Eurotiomycetidae</taxon>
        <taxon>Onygenales</taxon>
        <taxon>Ajellomycetaceae</taxon>
        <taxon>Histoplasma</taxon>
    </lineage>
</organism>
<feature type="chain" id="PRO_0000411772" description="Probable Xaa-Pro aminopeptidase P">
    <location>
        <begin position="1"/>
        <end position="617"/>
    </location>
</feature>
<feature type="binding site" evidence="1">
    <location>
        <position position="414"/>
    </location>
    <ligand>
        <name>Mn(2+)</name>
        <dbReference type="ChEBI" id="CHEBI:29035"/>
        <label>2</label>
    </ligand>
</feature>
<feature type="binding site" evidence="1">
    <location>
        <position position="425"/>
    </location>
    <ligand>
        <name>Mn(2+)</name>
        <dbReference type="ChEBI" id="CHEBI:29035"/>
        <label>1</label>
    </ligand>
</feature>
<feature type="binding site" evidence="1">
    <location>
        <position position="425"/>
    </location>
    <ligand>
        <name>Mn(2+)</name>
        <dbReference type="ChEBI" id="CHEBI:29035"/>
        <label>2</label>
    </ligand>
</feature>
<feature type="binding site" evidence="1">
    <location>
        <position position="523"/>
    </location>
    <ligand>
        <name>Mn(2+)</name>
        <dbReference type="ChEBI" id="CHEBI:29035"/>
        <label>1</label>
    </ligand>
</feature>
<feature type="binding site" evidence="1">
    <location>
        <position position="537"/>
    </location>
    <ligand>
        <name>Mn(2+)</name>
        <dbReference type="ChEBI" id="CHEBI:29035"/>
        <label>1</label>
    </ligand>
</feature>
<feature type="binding site" evidence="1">
    <location>
        <position position="537"/>
    </location>
    <ligand>
        <name>Mn(2+)</name>
        <dbReference type="ChEBI" id="CHEBI:29035"/>
        <label>2</label>
    </ligand>
</feature>
<protein>
    <recommendedName>
        <fullName>Probable Xaa-Pro aminopeptidase P</fullName>
        <shortName>AMPP</shortName>
        <shortName>Aminopeptidase P</shortName>
        <ecNumber>3.4.11.9</ecNumber>
    </recommendedName>
    <alternativeName>
        <fullName>Aminoacylproline aminopeptidase</fullName>
    </alternativeName>
    <alternativeName>
        <fullName>Prolidase</fullName>
    </alternativeName>
</protein>
<name>AMPP1_AJECN</name>
<dbReference type="EC" id="3.4.11.9"/>
<dbReference type="EMBL" id="CH476656">
    <property type="protein sequence ID" value="EDN06389.1"/>
    <property type="molecule type" value="Genomic_DNA"/>
</dbReference>
<dbReference type="SMR" id="A6R035"/>
<dbReference type="STRING" id="339724.A6R035"/>
<dbReference type="KEGG" id="aje:HCAG_02992"/>
<dbReference type="VEuPathDB" id="FungiDB:HCAG_02992"/>
<dbReference type="HOGENOM" id="CLU_011781_2_2_1"/>
<dbReference type="OMA" id="EPGMILS"/>
<dbReference type="OrthoDB" id="386at299071"/>
<dbReference type="Proteomes" id="UP000009297">
    <property type="component" value="Unassembled WGS sequence"/>
</dbReference>
<dbReference type="GO" id="GO:0005737">
    <property type="term" value="C:cytoplasm"/>
    <property type="evidence" value="ECO:0007669"/>
    <property type="project" value="UniProtKB-ARBA"/>
</dbReference>
<dbReference type="GO" id="GO:0046872">
    <property type="term" value="F:metal ion binding"/>
    <property type="evidence" value="ECO:0007669"/>
    <property type="project" value="UniProtKB-KW"/>
</dbReference>
<dbReference type="GO" id="GO:0070006">
    <property type="term" value="F:metalloaminopeptidase activity"/>
    <property type="evidence" value="ECO:0007669"/>
    <property type="project" value="InterPro"/>
</dbReference>
<dbReference type="GO" id="GO:0006508">
    <property type="term" value="P:proteolysis"/>
    <property type="evidence" value="ECO:0007669"/>
    <property type="project" value="UniProtKB-KW"/>
</dbReference>
<dbReference type="CDD" id="cd01085">
    <property type="entry name" value="APP"/>
    <property type="match status" value="1"/>
</dbReference>
<dbReference type="FunFam" id="3.40.350.10:FF:000010">
    <property type="entry name" value="Probable Xaa-Pro aminopeptidase P"/>
    <property type="match status" value="1"/>
</dbReference>
<dbReference type="FunFam" id="3.90.230.10:FF:000007">
    <property type="entry name" value="Xaa-Pro aminopeptidase P"/>
    <property type="match status" value="1"/>
</dbReference>
<dbReference type="FunFam" id="3.40.350.10:FF:000003">
    <property type="entry name" value="Xaa-pro aminopeptidase P"/>
    <property type="match status" value="1"/>
</dbReference>
<dbReference type="Gene3D" id="3.90.230.10">
    <property type="entry name" value="Creatinase/methionine aminopeptidase superfamily"/>
    <property type="match status" value="1"/>
</dbReference>
<dbReference type="Gene3D" id="3.40.350.10">
    <property type="entry name" value="Creatinase/prolidase N-terminal domain"/>
    <property type="match status" value="2"/>
</dbReference>
<dbReference type="InterPro" id="IPR029149">
    <property type="entry name" value="Creatin/AminoP/Spt16_N"/>
</dbReference>
<dbReference type="InterPro" id="IPR036005">
    <property type="entry name" value="Creatinase/aminopeptidase-like"/>
</dbReference>
<dbReference type="InterPro" id="IPR000587">
    <property type="entry name" value="Creatinase_N"/>
</dbReference>
<dbReference type="InterPro" id="IPR000994">
    <property type="entry name" value="Pept_M24"/>
</dbReference>
<dbReference type="InterPro" id="IPR033740">
    <property type="entry name" value="Pept_M24B"/>
</dbReference>
<dbReference type="InterPro" id="IPR032416">
    <property type="entry name" value="Peptidase_M24_C"/>
</dbReference>
<dbReference type="InterPro" id="IPR001131">
    <property type="entry name" value="Peptidase_M24B_aminopep-P_CS"/>
</dbReference>
<dbReference type="InterPro" id="IPR050422">
    <property type="entry name" value="X-Pro_aminopeptidase_P"/>
</dbReference>
<dbReference type="PANTHER" id="PTHR43763">
    <property type="entry name" value="XAA-PRO AMINOPEPTIDASE 1"/>
    <property type="match status" value="1"/>
</dbReference>
<dbReference type="PANTHER" id="PTHR43763:SF6">
    <property type="entry name" value="XAA-PRO AMINOPEPTIDASE 1"/>
    <property type="match status" value="1"/>
</dbReference>
<dbReference type="Pfam" id="PF01321">
    <property type="entry name" value="Creatinase_N"/>
    <property type="match status" value="1"/>
</dbReference>
<dbReference type="Pfam" id="PF16189">
    <property type="entry name" value="Creatinase_N_2"/>
    <property type="match status" value="1"/>
</dbReference>
<dbReference type="Pfam" id="PF00557">
    <property type="entry name" value="Peptidase_M24"/>
    <property type="match status" value="1"/>
</dbReference>
<dbReference type="Pfam" id="PF16188">
    <property type="entry name" value="Peptidase_M24_C"/>
    <property type="match status" value="1"/>
</dbReference>
<dbReference type="SUPFAM" id="SSF55920">
    <property type="entry name" value="Creatinase/aminopeptidase"/>
    <property type="match status" value="1"/>
</dbReference>
<dbReference type="SUPFAM" id="SSF53092">
    <property type="entry name" value="Creatinase/prolidase N-terminal domain"/>
    <property type="match status" value="1"/>
</dbReference>
<dbReference type="PROSITE" id="PS00491">
    <property type="entry name" value="PROLINE_PEPTIDASE"/>
    <property type="match status" value="1"/>
</dbReference>